<comment type="function">
    <text evidence="1">Involved in mRNA degradation. Catalyzes the phosphorolysis of single-stranded polyribonucleotides processively in the 3'- to 5'-direction.</text>
</comment>
<comment type="catalytic activity">
    <reaction evidence="1">
        <text>RNA(n+1) + phosphate = RNA(n) + a ribonucleoside 5'-diphosphate</text>
        <dbReference type="Rhea" id="RHEA:22096"/>
        <dbReference type="Rhea" id="RHEA-COMP:14527"/>
        <dbReference type="Rhea" id="RHEA-COMP:17342"/>
        <dbReference type="ChEBI" id="CHEBI:43474"/>
        <dbReference type="ChEBI" id="CHEBI:57930"/>
        <dbReference type="ChEBI" id="CHEBI:140395"/>
        <dbReference type="EC" id="2.7.7.8"/>
    </reaction>
</comment>
<comment type="cofactor">
    <cofactor evidence="1">
        <name>Mg(2+)</name>
        <dbReference type="ChEBI" id="CHEBI:18420"/>
    </cofactor>
</comment>
<comment type="subunit">
    <text evidence="1">Component of the RNA degradosome, which is a multiprotein complex involved in RNA processing and mRNA degradation.</text>
</comment>
<comment type="subcellular location">
    <subcellularLocation>
        <location evidence="1">Cytoplasm</location>
    </subcellularLocation>
</comment>
<comment type="similarity">
    <text evidence="1">Belongs to the polyribonucleotide nucleotidyltransferase family.</text>
</comment>
<keyword id="KW-0963">Cytoplasm</keyword>
<keyword id="KW-0460">Magnesium</keyword>
<keyword id="KW-0479">Metal-binding</keyword>
<keyword id="KW-0548">Nucleotidyltransferase</keyword>
<keyword id="KW-0694">RNA-binding</keyword>
<keyword id="KW-0808">Transferase</keyword>
<name>PNP_SHESA</name>
<protein>
    <recommendedName>
        <fullName evidence="1">Polyribonucleotide nucleotidyltransferase</fullName>
        <ecNumber evidence="1">2.7.7.8</ecNumber>
    </recommendedName>
    <alternativeName>
        <fullName evidence="1">Polynucleotide phosphorylase</fullName>
        <shortName evidence="1">PNPase</shortName>
    </alternativeName>
</protein>
<accession>A0KU01</accession>
<evidence type="ECO:0000255" key="1">
    <source>
        <dbReference type="HAMAP-Rule" id="MF_01595"/>
    </source>
</evidence>
<reference key="1">
    <citation type="submission" date="2006-09" db="EMBL/GenBank/DDBJ databases">
        <title>Complete sequence of chromosome 1 of Shewanella sp. ANA-3.</title>
        <authorList>
            <person name="Copeland A."/>
            <person name="Lucas S."/>
            <person name="Lapidus A."/>
            <person name="Barry K."/>
            <person name="Detter J.C."/>
            <person name="Glavina del Rio T."/>
            <person name="Hammon N."/>
            <person name="Israni S."/>
            <person name="Dalin E."/>
            <person name="Tice H."/>
            <person name="Pitluck S."/>
            <person name="Chertkov O."/>
            <person name="Brettin T."/>
            <person name="Bruce D."/>
            <person name="Han C."/>
            <person name="Tapia R."/>
            <person name="Gilna P."/>
            <person name="Schmutz J."/>
            <person name="Larimer F."/>
            <person name="Land M."/>
            <person name="Hauser L."/>
            <person name="Kyrpides N."/>
            <person name="Kim E."/>
            <person name="Newman D."/>
            <person name="Salticov C."/>
            <person name="Konstantinidis K."/>
            <person name="Klappenback J."/>
            <person name="Tiedje J."/>
            <person name="Richardson P."/>
        </authorList>
    </citation>
    <scope>NUCLEOTIDE SEQUENCE [LARGE SCALE GENOMIC DNA]</scope>
    <source>
        <strain>ANA-3</strain>
    </source>
</reference>
<organism>
    <name type="scientific">Shewanella sp. (strain ANA-3)</name>
    <dbReference type="NCBI Taxonomy" id="94122"/>
    <lineage>
        <taxon>Bacteria</taxon>
        <taxon>Pseudomonadati</taxon>
        <taxon>Pseudomonadota</taxon>
        <taxon>Gammaproteobacteria</taxon>
        <taxon>Alteromonadales</taxon>
        <taxon>Shewanellaceae</taxon>
        <taxon>Shewanella</taxon>
    </lineage>
</organism>
<sequence length="699" mass="75365">MNPIVKSFEYGQHTVTLETGVIARQADAAVLASMGDTTVLVTVVGKKEAEAGRDFFPLTVNYQEKTYAAGKIPGGFFKREGRPSEDETLIARLIDRPIRPLFPNGFTNEVQVIITVVSVDPQIEPDIISMIGTSAALAISGIPFSGPLGAARVGYINGEYVLNPTVTQLESSQLNLVVAGTESAVLMVESEAQALPEEVMLGSVVYGHDQQQVVIKAIAEFKAEAGKPAWNWTAPVANEALVAQVKELAEDGLAQAYQIQVKQDRYAQVAVVKAAAKEALLAANPDVDLREVDGLLGSLEKKVVRGRIIRGEPRIDGREPDMVRALSVLAGVLPRTHGSALFTRGETQALVTCTLGTERDAQKIDSIMGERTNRFMLHYNFPPYSVGETGMVGSPKRREIGHGKLAWRGINAVMPTAEEFPYSVRVVSEITESNGSSSMASVCGTSLALMDAGVPIKTSVAGIAMGLVKEGDNFVVLSDILGDEDHLGDMDFKVAGTRDGVTALQMDIKIEGITKEIMEIALQQAYGARVHILNVMDQAIGSHRDDISDHAPRITTIKINPEKIRDVIGKGGAVIRALTEETGTTIELEDDGTVKIASSNGDATREAIRRIEEITSEVEVGRIYNGKVIRIVDFGAFVNILPGKDGLVHISQISDERVANVSDHLELNQEVTVKVMEVDRQGRVRLSIKEAQTKEAAAE</sequence>
<proteinExistence type="inferred from homology"/>
<feature type="chain" id="PRO_0000329844" description="Polyribonucleotide nucleotidyltransferase">
    <location>
        <begin position="1"/>
        <end position="699"/>
    </location>
</feature>
<feature type="domain" description="KH" evidence="1">
    <location>
        <begin position="552"/>
        <end position="611"/>
    </location>
</feature>
<feature type="domain" description="S1 motif" evidence="1">
    <location>
        <begin position="621"/>
        <end position="689"/>
    </location>
</feature>
<feature type="binding site" evidence="1">
    <location>
        <position position="485"/>
    </location>
    <ligand>
        <name>Mg(2+)</name>
        <dbReference type="ChEBI" id="CHEBI:18420"/>
    </ligand>
</feature>
<feature type="binding site" evidence="1">
    <location>
        <position position="491"/>
    </location>
    <ligand>
        <name>Mg(2+)</name>
        <dbReference type="ChEBI" id="CHEBI:18420"/>
    </ligand>
</feature>
<gene>
    <name evidence="1" type="primary">pnp</name>
    <name type="ordered locus">Shewana3_1035</name>
</gene>
<dbReference type="EC" id="2.7.7.8" evidence="1"/>
<dbReference type="EMBL" id="CP000469">
    <property type="protein sequence ID" value="ABK47270.1"/>
    <property type="molecule type" value="Genomic_DNA"/>
</dbReference>
<dbReference type="RefSeq" id="WP_011716147.1">
    <property type="nucleotide sequence ID" value="NC_008577.1"/>
</dbReference>
<dbReference type="SMR" id="A0KU01"/>
<dbReference type="STRING" id="94122.Shewana3_1035"/>
<dbReference type="KEGG" id="shn:Shewana3_1035"/>
<dbReference type="eggNOG" id="COG1185">
    <property type="taxonomic scope" value="Bacteria"/>
</dbReference>
<dbReference type="HOGENOM" id="CLU_004217_2_2_6"/>
<dbReference type="OrthoDB" id="9804305at2"/>
<dbReference type="Proteomes" id="UP000002589">
    <property type="component" value="Chromosome"/>
</dbReference>
<dbReference type="GO" id="GO:0005829">
    <property type="term" value="C:cytosol"/>
    <property type="evidence" value="ECO:0007669"/>
    <property type="project" value="TreeGrafter"/>
</dbReference>
<dbReference type="GO" id="GO:0000175">
    <property type="term" value="F:3'-5'-RNA exonuclease activity"/>
    <property type="evidence" value="ECO:0007669"/>
    <property type="project" value="TreeGrafter"/>
</dbReference>
<dbReference type="GO" id="GO:0000287">
    <property type="term" value="F:magnesium ion binding"/>
    <property type="evidence" value="ECO:0007669"/>
    <property type="project" value="UniProtKB-UniRule"/>
</dbReference>
<dbReference type="GO" id="GO:0004654">
    <property type="term" value="F:polyribonucleotide nucleotidyltransferase activity"/>
    <property type="evidence" value="ECO:0007669"/>
    <property type="project" value="UniProtKB-UniRule"/>
</dbReference>
<dbReference type="GO" id="GO:0003723">
    <property type="term" value="F:RNA binding"/>
    <property type="evidence" value="ECO:0007669"/>
    <property type="project" value="UniProtKB-UniRule"/>
</dbReference>
<dbReference type="GO" id="GO:0006402">
    <property type="term" value="P:mRNA catabolic process"/>
    <property type="evidence" value="ECO:0007669"/>
    <property type="project" value="UniProtKB-UniRule"/>
</dbReference>
<dbReference type="GO" id="GO:0006396">
    <property type="term" value="P:RNA processing"/>
    <property type="evidence" value="ECO:0007669"/>
    <property type="project" value="InterPro"/>
</dbReference>
<dbReference type="CDD" id="cd02393">
    <property type="entry name" value="KH-I_PNPase"/>
    <property type="match status" value="1"/>
</dbReference>
<dbReference type="CDD" id="cd11363">
    <property type="entry name" value="RNase_PH_PNPase_1"/>
    <property type="match status" value="1"/>
</dbReference>
<dbReference type="CDD" id="cd11364">
    <property type="entry name" value="RNase_PH_PNPase_2"/>
    <property type="match status" value="1"/>
</dbReference>
<dbReference type="CDD" id="cd04472">
    <property type="entry name" value="S1_PNPase"/>
    <property type="match status" value="1"/>
</dbReference>
<dbReference type="FunFam" id="2.40.50.140:FF:000023">
    <property type="entry name" value="Polyribonucleotide nucleotidyltransferase"/>
    <property type="match status" value="1"/>
</dbReference>
<dbReference type="FunFam" id="3.30.1370.10:FF:000001">
    <property type="entry name" value="Polyribonucleotide nucleotidyltransferase"/>
    <property type="match status" value="1"/>
</dbReference>
<dbReference type="FunFam" id="3.30.230.70:FF:000001">
    <property type="entry name" value="Polyribonucleotide nucleotidyltransferase"/>
    <property type="match status" value="1"/>
</dbReference>
<dbReference type="FunFam" id="3.30.230.70:FF:000002">
    <property type="entry name" value="Polyribonucleotide nucleotidyltransferase"/>
    <property type="match status" value="1"/>
</dbReference>
<dbReference type="Gene3D" id="3.30.230.70">
    <property type="entry name" value="GHMP Kinase, N-terminal domain"/>
    <property type="match status" value="2"/>
</dbReference>
<dbReference type="Gene3D" id="3.30.1370.10">
    <property type="entry name" value="K Homology domain, type 1"/>
    <property type="match status" value="1"/>
</dbReference>
<dbReference type="Gene3D" id="2.40.50.140">
    <property type="entry name" value="Nucleic acid-binding proteins"/>
    <property type="match status" value="1"/>
</dbReference>
<dbReference type="HAMAP" id="MF_01595">
    <property type="entry name" value="PNPase"/>
    <property type="match status" value="1"/>
</dbReference>
<dbReference type="InterPro" id="IPR001247">
    <property type="entry name" value="ExoRNase_PH_dom1"/>
</dbReference>
<dbReference type="InterPro" id="IPR015847">
    <property type="entry name" value="ExoRNase_PH_dom2"/>
</dbReference>
<dbReference type="InterPro" id="IPR036345">
    <property type="entry name" value="ExoRNase_PH_dom2_sf"/>
</dbReference>
<dbReference type="InterPro" id="IPR004087">
    <property type="entry name" value="KH_dom"/>
</dbReference>
<dbReference type="InterPro" id="IPR004088">
    <property type="entry name" value="KH_dom_type_1"/>
</dbReference>
<dbReference type="InterPro" id="IPR036612">
    <property type="entry name" value="KH_dom_type_1_sf"/>
</dbReference>
<dbReference type="InterPro" id="IPR012340">
    <property type="entry name" value="NA-bd_OB-fold"/>
</dbReference>
<dbReference type="InterPro" id="IPR012162">
    <property type="entry name" value="PNPase"/>
</dbReference>
<dbReference type="InterPro" id="IPR027408">
    <property type="entry name" value="PNPase/RNase_PH_dom_sf"/>
</dbReference>
<dbReference type="InterPro" id="IPR015848">
    <property type="entry name" value="PNPase_PH_RNA-bd_bac/org-type"/>
</dbReference>
<dbReference type="InterPro" id="IPR036456">
    <property type="entry name" value="PNPase_PH_RNA-bd_sf"/>
</dbReference>
<dbReference type="InterPro" id="IPR020568">
    <property type="entry name" value="Ribosomal_Su5_D2-typ_SF"/>
</dbReference>
<dbReference type="InterPro" id="IPR003029">
    <property type="entry name" value="S1_domain"/>
</dbReference>
<dbReference type="NCBIfam" id="TIGR03591">
    <property type="entry name" value="polynuc_phos"/>
    <property type="match status" value="1"/>
</dbReference>
<dbReference type="NCBIfam" id="NF008805">
    <property type="entry name" value="PRK11824.1"/>
    <property type="match status" value="1"/>
</dbReference>
<dbReference type="PANTHER" id="PTHR11252">
    <property type="entry name" value="POLYRIBONUCLEOTIDE NUCLEOTIDYLTRANSFERASE"/>
    <property type="match status" value="1"/>
</dbReference>
<dbReference type="PANTHER" id="PTHR11252:SF0">
    <property type="entry name" value="POLYRIBONUCLEOTIDE NUCLEOTIDYLTRANSFERASE 1, MITOCHONDRIAL"/>
    <property type="match status" value="1"/>
</dbReference>
<dbReference type="Pfam" id="PF00013">
    <property type="entry name" value="KH_1"/>
    <property type="match status" value="1"/>
</dbReference>
<dbReference type="Pfam" id="PF03726">
    <property type="entry name" value="PNPase"/>
    <property type="match status" value="1"/>
</dbReference>
<dbReference type="Pfam" id="PF01138">
    <property type="entry name" value="RNase_PH"/>
    <property type="match status" value="2"/>
</dbReference>
<dbReference type="Pfam" id="PF03725">
    <property type="entry name" value="RNase_PH_C"/>
    <property type="match status" value="2"/>
</dbReference>
<dbReference type="Pfam" id="PF00575">
    <property type="entry name" value="S1"/>
    <property type="match status" value="1"/>
</dbReference>
<dbReference type="PIRSF" id="PIRSF005499">
    <property type="entry name" value="PNPase"/>
    <property type="match status" value="1"/>
</dbReference>
<dbReference type="SMART" id="SM00322">
    <property type="entry name" value="KH"/>
    <property type="match status" value="1"/>
</dbReference>
<dbReference type="SMART" id="SM00316">
    <property type="entry name" value="S1"/>
    <property type="match status" value="1"/>
</dbReference>
<dbReference type="SUPFAM" id="SSF54791">
    <property type="entry name" value="Eukaryotic type KH-domain (KH-domain type I)"/>
    <property type="match status" value="1"/>
</dbReference>
<dbReference type="SUPFAM" id="SSF50249">
    <property type="entry name" value="Nucleic acid-binding proteins"/>
    <property type="match status" value="1"/>
</dbReference>
<dbReference type="SUPFAM" id="SSF46915">
    <property type="entry name" value="Polynucleotide phosphorylase/guanosine pentaphosphate synthase (PNPase/GPSI), domain 3"/>
    <property type="match status" value="1"/>
</dbReference>
<dbReference type="SUPFAM" id="SSF55666">
    <property type="entry name" value="Ribonuclease PH domain 2-like"/>
    <property type="match status" value="2"/>
</dbReference>
<dbReference type="SUPFAM" id="SSF54211">
    <property type="entry name" value="Ribosomal protein S5 domain 2-like"/>
    <property type="match status" value="2"/>
</dbReference>
<dbReference type="PROSITE" id="PS50084">
    <property type="entry name" value="KH_TYPE_1"/>
    <property type="match status" value="1"/>
</dbReference>
<dbReference type="PROSITE" id="PS50126">
    <property type="entry name" value="S1"/>
    <property type="match status" value="1"/>
</dbReference>